<gene>
    <name evidence="1" type="primary">xseB</name>
    <name type="ordered locus">LAR_1114</name>
</gene>
<name>EX7S_LIMRJ</name>
<organism>
    <name type="scientific">Limosilactobacillus reuteri subsp. reuteri (strain JCM 1112)</name>
    <name type="common">Lactobacillus reuteri</name>
    <dbReference type="NCBI Taxonomy" id="557433"/>
    <lineage>
        <taxon>Bacteria</taxon>
        <taxon>Bacillati</taxon>
        <taxon>Bacillota</taxon>
        <taxon>Bacilli</taxon>
        <taxon>Lactobacillales</taxon>
        <taxon>Lactobacillaceae</taxon>
        <taxon>Limosilactobacillus</taxon>
    </lineage>
</organism>
<reference key="1">
    <citation type="journal article" date="2008" name="DNA Res.">
        <title>Comparative genome analysis of Lactobacillus reuteri and Lactobacillus fermentum reveal a genomic island for reuterin and cobalamin production.</title>
        <authorList>
            <person name="Morita H."/>
            <person name="Toh H."/>
            <person name="Fukuda S."/>
            <person name="Horikawa H."/>
            <person name="Oshima K."/>
            <person name="Suzuki T."/>
            <person name="Murakami M."/>
            <person name="Hisamatsu S."/>
            <person name="Kato Y."/>
            <person name="Takizawa T."/>
            <person name="Fukuoka H."/>
            <person name="Yoshimura T."/>
            <person name="Itoh K."/>
            <person name="O'Sullivan D.J."/>
            <person name="McKay L.L."/>
            <person name="Ohno H."/>
            <person name="Kikuchi J."/>
            <person name="Masaoka T."/>
            <person name="Hattori M."/>
        </authorList>
    </citation>
    <scope>NUCLEOTIDE SEQUENCE [LARGE SCALE GENOMIC DNA]</scope>
    <source>
        <strain>JCM 1112</strain>
    </source>
</reference>
<protein>
    <recommendedName>
        <fullName evidence="1">Exodeoxyribonuclease 7 small subunit</fullName>
        <ecNumber evidence="1">3.1.11.6</ecNumber>
    </recommendedName>
    <alternativeName>
        <fullName evidence="1">Exodeoxyribonuclease VII small subunit</fullName>
        <shortName evidence="1">Exonuclease VII small subunit</shortName>
    </alternativeName>
</protein>
<dbReference type="EC" id="3.1.11.6" evidence="1"/>
<dbReference type="EMBL" id="AP007281">
    <property type="protein sequence ID" value="BAG25630.1"/>
    <property type="molecule type" value="Genomic_DNA"/>
</dbReference>
<dbReference type="RefSeq" id="WP_003663862.1">
    <property type="nucleotide sequence ID" value="NC_010609.1"/>
</dbReference>
<dbReference type="SMR" id="B2G848"/>
<dbReference type="KEGG" id="lrf:LAR_1114"/>
<dbReference type="HOGENOM" id="CLU_145918_3_2_9"/>
<dbReference type="GO" id="GO:0005829">
    <property type="term" value="C:cytosol"/>
    <property type="evidence" value="ECO:0007669"/>
    <property type="project" value="TreeGrafter"/>
</dbReference>
<dbReference type="GO" id="GO:0009318">
    <property type="term" value="C:exodeoxyribonuclease VII complex"/>
    <property type="evidence" value="ECO:0007669"/>
    <property type="project" value="InterPro"/>
</dbReference>
<dbReference type="GO" id="GO:0008855">
    <property type="term" value="F:exodeoxyribonuclease VII activity"/>
    <property type="evidence" value="ECO:0007669"/>
    <property type="project" value="UniProtKB-UniRule"/>
</dbReference>
<dbReference type="GO" id="GO:0006308">
    <property type="term" value="P:DNA catabolic process"/>
    <property type="evidence" value="ECO:0007669"/>
    <property type="project" value="UniProtKB-UniRule"/>
</dbReference>
<dbReference type="Gene3D" id="1.10.287.1040">
    <property type="entry name" value="Exonuclease VII, small subunit"/>
    <property type="match status" value="1"/>
</dbReference>
<dbReference type="HAMAP" id="MF_00337">
    <property type="entry name" value="Exonuc_7_S"/>
    <property type="match status" value="1"/>
</dbReference>
<dbReference type="InterPro" id="IPR003761">
    <property type="entry name" value="Exonuc_VII_S"/>
</dbReference>
<dbReference type="InterPro" id="IPR037004">
    <property type="entry name" value="Exonuc_VII_ssu_sf"/>
</dbReference>
<dbReference type="NCBIfam" id="NF002138">
    <property type="entry name" value="PRK00977.1-2"/>
    <property type="match status" value="1"/>
</dbReference>
<dbReference type="NCBIfam" id="TIGR01280">
    <property type="entry name" value="xseB"/>
    <property type="match status" value="1"/>
</dbReference>
<dbReference type="PANTHER" id="PTHR34137">
    <property type="entry name" value="EXODEOXYRIBONUCLEASE 7 SMALL SUBUNIT"/>
    <property type="match status" value="1"/>
</dbReference>
<dbReference type="PANTHER" id="PTHR34137:SF1">
    <property type="entry name" value="EXODEOXYRIBONUCLEASE 7 SMALL SUBUNIT"/>
    <property type="match status" value="1"/>
</dbReference>
<dbReference type="Pfam" id="PF02609">
    <property type="entry name" value="Exonuc_VII_S"/>
    <property type="match status" value="1"/>
</dbReference>
<dbReference type="SUPFAM" id="SSF116842">
    <property type="entry name" value="XseB-like"/>
    <property type="match status" value="1"/>
</dbReference>
<comment type="function">
    <text evidence="1">Bidirectionally degrades single-stranded DNA into large acid-insoluble oligonucleotides, which are then degraded further into small acid-soluble oligonucleotides.</text>
</comment>
<comment type="catalytic activity">
    <reaction evidence="1">
        <text>Exonucleolytic cleavage in either 5'- to 3'- or 3'- to 5'-direction to yield nucleoside 5'-phosphates.</text>
        <dbReference type="EC" id="3.1.11.6"/>
    </reaction>
</comment>
<comment type="subunit">
    <text evidence="1">Heterooligomer composed of large and small subunits.</text>
</comment>
<comment type="subcellular location">
    <subcellularLocation>
        <location evidence="1">Cytoplasm</location>
    </subcellularLocation>
</comment>
<comment type="similarity">
    <text evidence="1">Belongs to the XseB family.</text>
</comment>
<accession>B2G848</accession>
<feature type="chain" id="PRO_1000119935" description="Exodeoxyribonuclease 7 small subunit">
    <location>
        <begin position="1"/>
        <end position="93"/>
    </location>
</feature>
<feature type="region of interest" description="Disordered" evidence="2">
    <location>
        <begin position="61"/>
        <end position="93"/>
    </location>
</feature>
<feature type="compositionally biased region" description="Basic and acidic residues" evidence="2">
    <location>
        <begin position="61"/>
        <end position="75"/>
    </location>
</feature>
<sequence>MATAKPTFEEQLAQLQQIVNHLEQGNVPLEEALQQFQEGIKLSKELQTKLTNAEKTLGHLIDDNGDEKVYEKQTDDPSNNGGGNRGFGSADEQ</sequence>
<evidence type="ECO:0000255" key="1">
    <source>
        <dbReference type="HAMAP-Rule" id="MF_00337"/>
    </source>
</evidence>
<evidence type="ECO:0000256" key="2">
    <source>
        <dbReference type="SAM" id="MobiDB-lite"/>
    </source>
</evidence>
<keyword id="KW-0963">Cytoplasm</keyword>
<keyword id="KW-0269">Exonuclease</keyword>
<keyword id="KW-0378">Hydrolase</keyword>
<keyword id="KW-0540">Nuclease</keyword>
<proteinExistence type="inferred from homology"/>